<evidence type="ECO:0000250" key="1">
    <source>
        <dbReference type="UniProtKB" id="P62617"/>
    </source>
</evidence>
<evidence type="ECO:0000250" key="2">
    <source>
        <dbReference type="UniProtKB" id="Q9CAK8"/>
    </source>
</evidence>
<evidence type="ECO:0000255" key="3"/>
<evidence type="ECO:0000305" key="4"/>
<name>ISPF_CATRO</name>
<dbReference type="EC" id="4.6.1.12" evidence="2"/>
<dbReference type="EMBL" id="AF250236">
    <property type="protein sequence ID" value="AAF65155.1"/>
    <property type="molecule type" value="mRNA"/>
</dbReference>
<dbReference type="SMR" id="Q9M4W3"/>
<dbReference type="UniPathway" id="UPA00056">
    <property type="reaction ID" value="UER00095"/>
</dbReference>
<dbReference type="GO" id="GO:0009570">
    <property type="term" value="C:chloroplast stroma"/>
    <property type="evidence" value="ECO:0007669"/>
    <property type="project" value="UniProtKB-SubCell"/>
</dbReference>
<dbReference type="GO" id="GO:0008685">
    <property type="term" value="F:2-C-methyl-D-erythritol 2,4-cyclodiphosphate synthase activity"/>
    <property type="evidence" value="ECO:0007669"/>
    <property type="project" value="UniProtKB-EC"/>
</dbReference>
<dbReference type="GO" id="GO:0046872">
    <property type="term" value="F:metal ion binding"/>
    <property type="evidence" value="ECO:0007669"/>
    <property type="project" value="UniProtKB-KW"/>
</dbReference>
<dbReference type="GO" id="GO:0019288">
    <property type="term" value="P:isopentenyl diphosphate biosynthetic process, methylerythritol 4-phosphate pathway"/>
    <property type="evidence" value="ECO:0007669"/>
    <property type="project" value="UniProtKB-UniPathway"/>
</dbReference>
<dbReference type="GO" id="GO:0016114">
    <property type="term" value="P:terpenoid biosynthetic process"/>
    <property type="evidence" value="ECO:0007669"/>
    <property type="project" value="InterPro"/>
</dbReference>
<dbReference type="CDD" id="cd00554">
    <property type="entry name" value="MECDP_synthase"/>
    <property type="match status" value="1"/>
</dbReference>
<dbReference type="FunFam" id="3.30.1330.50:FF:000002">
    <property type="entry name" value="2-C-methyl-D-erythritol 2,4-cyclodiphosphate synthase"/>
    <property type="match status" value="1"/>
</dbReference>
<dbReference type="Gene3D" id="3.30.1330.50">
    <property type="entry name" value="2-C-methyl-D-erythritol 2,4-cyclodiphosphate synthase"/>
    <property type="match status" value="1"/>
</dbReference>
<dbReference type="HAMAP" id="MF_00107">
    <property type="entry name" value="IspF"/>
    <property type="match status" value="1"/>
</dbReference>
<dbReference type="InterPro" id="IPR003526">
    <property type="entry name" value="MECDP_synthase"/>
</dbReference>
<dbReference type="InterPro" id="IPR020555">
    <property type="entry name" value="MECDP_synthase_CS"/>
</dbReference>
<dbReference type="InterPro" id="IPR036571">
    <property type="entry name" value="MECDP_synthase_sf"/>
</dbReference>
<dbReference type="NCBIfam" id="TIGR00151">
    <property type="entry name" value="ispF"/>
    <property type="match status" value="1"/>
</dbReference>
<dbReference type="PANTHER" id="PTHR43181">
    <property type="entry name" value="2-C-METHYL-D-ERYTHRITOL 2,4-CYCLODIPHOSPHATE SYNTHASE, CHLOROPLASTIC"/>
    <property type="match status" value="1"/>
</dbReference>
<dbReference type="PANTHER" id="PTHR43181:SF1">
    <property type="entry name" value="2-C-METHYL-D-ERYTHRITOL 2,4-CYCLODIPHOSPHATE SYNTHASE, CHLOROPLASTIC"/>
    <property type="match status" value="1"/>
</dbReference>
<dbReference type="Pfam" id="PF02542">
    <property type="entry name" value="YgbB"/>
    <property type="match status" value="1"/>
</dbReference>
<dbReference type="SUPFAM" id="SSF69765">
    <property type="entry name" value="IpsF-like"/>
    <property type="match status" value="1"/>
</dbReference>
<dbReference type="PROSITE" id="PS01350">
    <property type="entry name" value="ISPF"/>
    <property type="match status" value="1"/>
</dbReference>
<sequence>MAMATSFYCSTAIPSKKTNQNRENFLCSPVGGSKTTPSYIRLSTRQSRTLSLVVSAAASGAAVEAEPKFAAVTPSKILSFRVGHGFDLHRLEPGYPLIIGGINIPHDRGCEAHSDGDVLLHCVVDAILGALGLPDIGQIFPDTDPKWKGAPSSVFIKEAVRLMDEAGYELGNLDATLILQRPKVSPHKEAIRQNLCQLLGADPCVVNLKAKTHEKVDSLGENRSIAAHTVVLLMRK</sequence>
<comment type="function">
    <text evidence="2">Converts 4-diphosphocytidyl-2C-methyl-D-erythritol 2-phosphate into 2C-methyl-D-erythritol 2,4-cyclodiphosphate and CMP.</text>
</comment>
<comment type="catalytic activity">
    <reaction evidence="2">
        <text>4-CDP-2-C-methyl-D-erythritol 2-phosphate = 2-C-methyl-D-erythritol 2,4-cyclic diphosphate + CMP</text>
        <dbReference type="Rhea" id="RHEA:23864"/>
        <dbReference type="ChEBI" id="CHEBI:57919"/>
        <dbReference type="ChEBI" id="CHEBI:58483"/>
        <dbReference type="ChEBI" id="CHEBI:60377"/>
        <dbReference type="EC" id="4.6.1.12"/>
    </reaction>
</comment>
<comment type="cofactor">
    <cofactor evidence="2">
        <name>a divalent metal cation</name>
        <dbReference type="ChEBI" id="CHEBI:60240"/>
    </cofactor>
    <text evidence="2">Binds 1 divalent metal cation per subunit.</text>
</comment>
<comment type="pathway">
    <text evidence="4">Isoprenoid biosynthesis; isopentenyl diphosphate biosynthesis via DXP pathway; isopentenyl diphosphate from 1-deoxy-D-xylulose 5-phosphate: step 4/6.</text>
</comment>
<comment type="subunit">
    <text evidence="2">Homotrimer.</text>
</comment>
<comment type="subcellular location">
    <subcellularLocation>
        <location evidence="2">Plastid</location>
        <location evidence="2">Chloroplast stroma</location>
    </subcellularLocation>
</comment>
<comment type="similarity">
    <text evidence="4">Belongs to the IspF family.</text>
</comment>
<organism>
    <name type="scientific">Catharanthus roseus</name>
    <name type="common">Madagascar periwinkle</name>
    <name type="synonym">Vinca rosea</name>
    <dbReference type="NCBI Taxonomy" id="4058"/>
    <lineage>
        <taxon>Eukaryota</taxon>
        <taxon>Viridiplantae</taxon>
        <taxon>Streptophyta</taxon>
        <taxon>Embryophyta</taxon>
        <taxon>Tracheophyta</taxon>
        <taxon>Spermatophyta</taxon>
        <taxon>Magnoliopsida</taxon>
        <taxon>eudicotyledons</taxon>
        <taxon>Gunneridae</taxon>
        <taxon>Pentapetalae</taxon>
        <taxon>asterids</taxon>
        <taxon>lamiids</taxon>
        <taxon>Gentianales</taxon>
        <taxon>Apocynaceae</taxon>
        <taxon>Rauvolfioideae</taxon>
        <taxon>Vinceae</taxon>
        <taxon>Catharanthinae</taxon>
        <taxon>Catharanthus</taxon>
    </lineage>
</organism>
<keyword id="KW-0150">Chloroplast</keyword>
<keyword id="KW-0414">Isoprene biosynthesis</keyword>
<keyword id="KW-0456">Lyase</keyword>
<keyword id="KW-0479">Metal-binding</keyword>
<keyword id="KW-0934">Plastid</keyword>
<keyword id="KW-0809">Transit peptide</keyword>
<gene>
    <name type="primary">ISPF</name>
    <name type="synonym">MECS</name>
</gene>
<protein>
    <recommendedName>
        <fullName evidence="4">2-C-methyl-D-erythritol 2,4-cyclodiphosphate synthase, chloroplastic</fullName>
        <shortName evidence="4">MECDP-synthase</shortName>
        <shortName evidence="4">MECPS</shortName>
        <ecNumber evidence="2">4.6.1.12</ecNumber>
    </recommendedName>
</protein>
<reference key="1">
    <citation type="journal article" date="2000" name="Biochim. Biophys. Acta">
        <title>Cloning and expression of cDNAs encoding two enzymes of the MEP pathway in Catharanthus roseus.</title>
        <authorList>
            <person name="Veau B."/>
            <person name="Courtois M."/>
            <person name="Oudin A."/>
            <person name="Chenieux J.-C."/>
            <person name="Rideau M."/>
            <person name="Clastre M."/>
        </authorList>
    </citation>
    <scope>NUCLEOTIDE SEQUENCE [MRNA]</scope>
</reference>
<proteinExistence type="evidence at transcript level"/>
<accession>Q9M4W3</accession>
<feature type="transit peptide" description="Chloroplast" evidence="3">
    <location>
        <begin position="1"/>
        <end position="55"/>
    </location>
</feature>
<feature type="chain" id="PRO_0000016483" description="2-C-methyl-D-erythritol 2,4-cyclodiphosphate synthase, chloroplastic">
    <location>
        <begin position="56"/>
        <end position="236"/>
    </location>
</feature>
<feature type="binding site" evidence="1">
    <location>
        <begin position="87"/>
        <end position="89"/>
    </location>
    <ligand>
        <name>substrate</name>
    </ligand>
</feature>
<feature type="binding site" evidence="1">
    <location>
        <position position="87"/>
    </location>
    <ligand>
        <name>a divalent metal cation</name>
        <dbReference type="ChEBI" id="CHEBI:60240"/>
    </ligand>
</feature>
<feature type="binding site" evidence="1">
    <location>
        <position position="89"/>
    </location>
    <ligand>
        <name>a divalent metal cation</name>
        <dbReference type="ChEBI" id="CHEBI:60240"/>
    </ligand>
</feature>
<feature type="binding site" evidence="1">
    <location>
        <begin position="113"/>
        <end position="114"/>
    </location>
    <ligand>
        <name>substrate</name>
    </ligand>
</feature>
<feature type="binding site" evidence="1">
    <location>
        <begin position="117"/>
        <end position="125"/>
    </location>
    <ligand>
        <name>substrate</name>
    </ligand>
</feature>
<feature type="binding site" evidence="1">
    <location>
        <position position="121"/>
    </location>
    <ligand>
        <name>a divalent metal cation</name>
        <dbReference type="ChEBI" id="CHEBI:60240"/>
    </ligand>
</feature>
<feature type="binding site" evidence="1">
    <location>
        <begin position="135"/>
        <end position="137"/>
    </location>
    <ligand>
        <name>substrate</name>
    </ligand>
</feature>
<feature type="binding site" evidence="1">
    <location>
        <begin position="140"/>
        <end position="144"/>
    </location>
    <ligand>
        <name>substrate</name>
    </ligand>
</feature>
<feature type="binding site" evidence="1">
    <location>
        <position position="144"/>
    </location>
    <ligand>
        <name>substrate</name>
    </ligand>
</feature>
<feature type="binding site" evidence="1">
    <location>
        <begin position="179"/>
        <end position="185"/>
    </location>
    <ligand>
        <name>substrate</name>
    </ligand>
</feature>
<feature type="binding site" evidence="1">
    <location>
        <begin position="210"/>
        <end position="214"/>
    </location>
    <ligand>
        <name>substrate</name>
    </ligand>
</feature>
<feature type="site" description="Transition state stabilizer" evidence="1">
    <location>
        <position position="113"/>
    </location>
</feature>
<feature type="site" description="Transition state stabilizer" evidence="1">
    <location>
        <position position="212"/>
    </location>
</feature>